<keyword id="KW-0027">Amidation</keyword>
<keyword id="KW-0044">Antibiotic</keyword>
<keyword id="KW-0929">Antimicrobial</keyword>
<keyword id="KW-0147">Chitin-binding</keyword>
<keyword id="KW-1015">Disulfide bond</keyword>
<keyword id="KW-0295">Fungicide</keyword>
<keyword id="KW-0732">Signal</keyword>
<feature type="signal peptide" evidence="2">
    <location>
        <begin position="1"/>
        <end position="21"/>
    </location>
</feature>
<feature type="chain" id="PRO_0000023504" description="Penaeidin-2b">
    <location>
        <begin position="22"/>
        <end position="71"/>
    </location>
</feature>
<feature type="modified residue" description="Lysine amide" evidence="1">
    <location>
        <position position="71"/>
    </location>
</feature>
<feature type="disulfide bond" evidence="1">
    <location>
        <begin position="45"/>
        <end position="59"/>
    </location>
</feature>
<feature type="disulfide bond" evidence="1">
    <location>
        <begin position="48"/>
        <end position="66"/>
    </location>
</feature>
<feature type="disulfide bond" evidence="1">
    <location>
        <begin position="60"/>
        <end position="67"/>
    </location>
</feature>
<reference key="1">
    <citation type="journal article" date="2002" name="Immunogenetics">
        <title>Diversity of the penaeidin antimicrobial peptides in two shrimp species.</title>
        <authorList>
            <person name="Cuthbertson B.J."/>
            <person name="Shepard E.F."/>
            <person name="Chapman R.W."/>
            <person name="Gross P.S."/>
        </authorList>
    </citation>
    <scope>NUCLEOTIDE SEQUENCE [MRNA]</scope>
    <source>
        <tissue>Hemocyte</tissue>
    </source>
</reference>
<accession>Q963C4</accession>
<sequence>MRLVVCLVFLASFALVCQGEAYRGGYTGPIPRPPPIGRPPLRPVCNACYRLSVSDARNCCIKFGSCCHLVKG</sequence>
<comment type="function">
    <text evidence="1">Antibacterial and antifungal activity. Presents chitin-binding activity (By similarity).</text>
</comment>
<comment type="subcellular location">
    <subcellularLocation>
        <location>Cytoplasmic granule</location>
    </subcellularLocation>
    <text>Cytoplasmic granules of hemocytes and to a lesser extent in small granules of hemocytes.</text>
</comment>
<comment type="similarity">
    <text evidence="3">Belongs to the penaeidin family.</text>
</comment>
<name>PEN2B_PENVA</name>
<organism>
    <name type="scientific">Penaeus vannamei</name>
    <name type="common">Whiteleg shrimp</name>
    <name type="synonym">Litopenaeus vannamei</name>
    <dbReference type="NCBI Taxonomy" id="6689"/>
    <lineage>
        <taxon>Eukaryota</taxon>
        <taxon>Metazoa</taxon>
        <taxon>Ecdysozoa</taxon>
        <taxon>Arthropoda</taxon>
        <taxon>Crustacea</taxon>
        <taxon>Multicrustacea</taxon>
        <taxon>Malacostraca</taxon>
        <taxon>Eumalacostraca</taxon>
        <taxon>Eucarida</taxon>
        <taxon>Decapoda</taxon>
        <taxon>Dendrobranchiata</taxon>
        <taxon>Penaeoidea</taxon>
        <taxon>Penaeidae</taxon>
        <taxon>Penaeus</taxon>
    </lineage>
</organism>
<evidence type="ECO:0000250" key="1"/>
<evidence type="ECO:0000255" key="2"/>
<evidence type="ECO:0000305" key="3"/>
<protein>
    <recommendedName>
        <fullName>Penaeidin-2b</fullName>
        <shortName>Pen-2b</shortName>
    </recommendedName>
</protein>
<proteinExistence type="inferred from homology"/>
<dbReference type="EMBL" id="AF390146">
    <property type="protein sequence ID" value="AAK77539.1"/>
    <property type="molecule type" value="mRNA"/>
</dbReference>
<dbReference type="SMR" id="Q963C4"/>
<dbReference type="GO" id="GO:0005737">
    <property type="term" value="C:cytoplasm"/>
    <property type="evidence" value="ECO:0007669"/>
    <property type="project" value="InterPro"/>
</dbReference>
<dbReference type="GO" id="GO:0008061">
    <property type="term" value="F:chitin binding"/>
    <property type="evidence" value="ECO:0007669"/>
    <property type="project" value="UniProtKB-KW"/>
</dbReference>
<dbReference type="GO" id="GO:0042742">
    <property type="term" value="P:defense response to bacterium"/>
    <property type="evidence" value="ECO:0007669"/>
    <property type="project" value="UniProtKB-KW"/>
</dbReference>
<dbReference type="GO" id="GO:0050832">
    <property type="term" value="P:defense response to fungus"/>
    <property type="evidence" value="ECO:0007669"/>
    <property type="project" value="UniProtKB-KW"/>
</dbReference>
<dbReference type="GO" id="GO:0031640">
    <property type="term" value="P:killing of cells of another organism"/>
    <property type="evidence" value="ECO:0007669"/>
    <property type="project" value="UniProtKB-KW"/>
</dbReference>
<dbReference type="InterPro" id="IPR009226">
    <property type="entry name" value="Penaeidin"/>
</dbReference>
<dbReference type="Pfam" id="PF05927">
    <property type="entry name" value="Penaeidin"/>
    <property type="match status" value="1"/>
</dbReference>